<name>RRF_STAAB</name>
<sequence length="184" mass="20353">MSDIINETKSRMQKSIESLSRELANISAGRANSNLLNGVTVDYYGAPTPVQQLASINVPEARLLVISPYDKTSVADIEKAIIAANLGVNPTSDGEVIRIAVPALTEERRKERVKDVKKIGEEAKVSVRNIRRDMNDQLKKDEKNGDITEDELRSGTEDVQKATDNSIKEIDQMIADKEKDIMSV</sequence>
<accession>Q2YXK9</accession>
<feature type="chain" id="PRO_1000003278" description="Ribosome-recycling factor">
    <location>
        <begin position="1"/>
        <end position="184"/>
    </location>
</feature>
<feature type="region of interest" description="Disordered" evidence="2">
    <location>
        <begin position="134"/>
        <end position="167"/>
    </location>
</feature>
<evidence type="ECO:0000255" key="1">
    <source>
        <dbReference type="HAMAP-Rule" id="MF_00040"/>
    </source>
</evidence>
<evidence type="ECO:0000256" key="2">
    <source>
        <dbReference type="SAM" id="MobiDB-lite"/>
    </source>
</evidence>
<organism>
    <name type="scientific">Staphylococcus aureus (strain bovine RF122 / ET3-1)</name>
    <dbReference type="NCBI Taxonomy" id="273036"/>
    <lineage>
        <taxon>Bacteria</taxon>
        <taxon>Bacillati</taxon>
        <taxon>Bacillota</taxon>
        <taxon>Bacilli</taxon>
        <taxon>Bacillales</taxon>
        <taxon>Staphylococcaceae</taxon>
        <taxon>Staphylococcus</taxon>
    </lineage>
</organism>
<keyword id="KW-0963">Cytoplasm</keyword>
<keyword id="KW-0648">Protein biosynthesis</keyword>
<protein>
    <recommendedName>
        <fullName evidence="1">Ribosome-recycling factor</fullName>
        <shortName evidence="1">RRF</shortName>
    </recommendedName>
    <alternativeName>
        <fullName evidence="1">Ribosome-releasing factor</fullName>
    </alternativeName>
</protein>
<reference key="1">
    <citation type="journal article" date="2007" name="PLoS ONE">
        <title>Molecular correlates of host specialization in Staphylococcus aureus.</title>
        <authorList>
            <person name="Herron-Olson L."/>
            <person name="Fitzgerald J.R."/>
            <person name="Musser J.M."/>
            <person name="Kapur V."/>
        </authorList>
    </citation>
    <scope>NUCLEOTIDE SEQUENCE [LARGE SCALE GENOMIC DNA]</scope>
    <source>
        <strain>bovine RF122 / ET3-1</strain>
    </source>
</reference>
<gene>
    <name evidence="1" type="primary">frr</name>
    <name type="ordered locus">SAB1121</name>
</gene>
<dbReference type="EMBL" id="AJ938182">
    <property type="protein sequence ID" value="CAI80810.1"/>
    <property type="molecule type" value="Genomic_DNA"/>
</dbReference>
<dbReference type="RefSeq" id="WP_001280006.1">
    <property type="nucleotide sequence ID" value="NC_007622.1"/>
</dbReference>
<dbReference type="SMR" id="Q2YXK9"/>
<dbReference type="KEGG" id="sab:SAB1121"/>
<dbReference type="HOGENOM" id="CLU_073981_2_0_9"/>
<dbReference type="GO" id="GO:0005737">
    <property type="term" value="C:cytoplasm"/>
    <property type="evidence" value="ECO:0007669"/>
    <property type="project" value="UniProtKB-SubCell"/>
</dbReference>
<dbReference type="GO" id="GO:0043023">
    <property type="term" value="F:ribosomal large subunit binding"/>
    <property type="evidence" value="ECO:0007669"/>
    <property type="project" value="TreeGrafter"/>
</dbReference>
<dbReference type="GO" id="GO:0006415">
    <property type="term" value="P:translational termination"/>
    <property type="evidence" value="ECO:0007669"/>
    <property type="project" value="UniProtKB-UniRule"/>
</dbReference>
<dbReference type="CDD" id="cd00520">
    <property type="entry name" value="RRF"/>
    <property type="match status" value="1"/>
</dbReference>
<dbReference type="FunFam" id="1.10.132.20:FF:000001">
    <property type="entry name" value="Ribosome-recycling factor"/>
    <property type="match status" value="1"/>
</dbReference>
<dbReference type="FunFam" id="3.30.1360.40:FF:000001">
    <property type="entry name" value="Ribosome-recycling factor"/>
    <property type="match status" value="1"/>
</dbReference>
<dbReference type="Gene3D" id="3.30.1360.40">
    <property type="match status" value="1"/>
</dbReference>
<dbReference type="Gene3D" id="1.10.132.20">
    <property type="entry name" value="Ribosome-recycling factor"/>
    <property type="match status" value="1"/>
</dbReference>
<dbReference type="HAMAP" id="MF_00040">
    <property type="entry name" value="RRF"/>
    <property type="match status" value="1"/>
</dbReference>
<dbReference type="InterPro" id="IPR002661">
    <property type="entry name" value="Ribosome_recyc_fac"/>
</dbReference>
<dbReference type="InterPro" id="IPR023584">
    <property type="entry name" value="Ribosome_recyc_fac_dom"/>
</dbReference>
<dbReference type="InterPro" id="IPR036191">
    <property type="entry name" value="RRF_sf"/>
</dbReference>
<dbReference type="NCBIfam" id="TIGR00496">
    <property type="entry name" value="frr"/>
    <property type="match status" value="1"/>
</dbReference>
<dbReference type="PANTHER" id="PTHR20982:SF3">
    <property type="entry name" value="MITOCHONDRIAL RIBOSOME RECYCLING FACTOR PSEUDO 1"/>
    <property type="match status" value="1"/>
</dbReference>
<dbReference type="PANTHER" id="PTHR20982">
    <property type="entry name" value="RIBOSOME RECYCLING FACTOR"/>
    <property type="match status" value="1"/>
</dbReference>
<dbReference type="Pfam" id="PF01765">
    <property type="entry name" value="RRF"/>
    <property type="match status" value="1"/>
</dbReference>
<dbReference type="SUPFAM" id="SSF55194">
    <property type="entry name" value="Ribosome recycling factor, RRF"/>
    <property type="match status" value="1"/>
</dbReference>
<proteinExistence type="inferred from homology"/>
<comment type="function">
    <text evidence="1">Responsible for the release of ribosomes from messenger RNA at the termination of protein biosynthesis. May increase the efficiency of translation by recycling ribosomes from one round of translation to another.</text>
</comment>
<comment type="subcellular location">
    <subcellularLocation>
        <location evidence="1">Cytoplasm</location>
    </subcellularLocation>
</comment>
<comment type="similarity">
    <text evidence="1">Belongs to the RRF family.</text>
</comment>